<dbReference type="EMBL" id="BC087646">
    <property type="protein sequence ID" value="AAH87646.1"/>
    <property type="molecule type" value="mRNA"/>
</dbReference>
<dbReference type="RefSeq" id="NP_001009604.1">
    <property type="nucleotide sequence ID" value="NM_001009604.2"/>
</dbReference>
<dbReference type="FunCoup" id="Q5PPK1">
    <property type="interactions" value="483"/>
</dbReference>
<dbReference type="STRING" id="10116.ENSRNOP00000001336"/>
<dbReference type="PhosphoSitePlus" id="Q5PPK1"/>
<dbReference type="PaxDb" id="10116-ENSRNOP00000001336"/>
<dbReference type="Ensembl" id="ENSRNOT00000001336.7">
    <property type="protein sequence ID" value="ENSRNOP00000001336.4"/>
    <property type="gene ID" value="ENSRNOG00000001009.8"/>
</dbReference>
<dbReference type="GeneID" id="304284"/>
<dbReference type="KEGG" id="rno:304284"/>
<dbReference type="AGR" id="RGD:1309187"/>
<dbReference type="CTD" id="25798"/>
<dbReference type="RGD" id="1309187">
    <property type="gene designation" value="Bri3"/>
</dbReference>
<dbReference type="eggNOG" id="KOG4517">
    <property type="taxonomic scope" value="Eukaryota"/>
</dbReference>
<dbReference type="GeneTree" id="ENSGT00510000048486"/>
<dbReference type="HOGENOM" id="CLU_138141_0_0_1"/>
<dbReference type="InParanoid" id="Q5PPK1"/>
<dbReference type="OMA" id="YEYGPQQ"/>
<dbReference type="OrthoDB" id="2564984at2759"/>
<dbReference type="PhylomeDB" id="Q5PPK1"/>
<dbReference type="TreeFam" id="TF329242"/>
<dbReference type="Reactome" id="R-RNO-6798695">
    <property type="pathway name" value="Neutrophil degranulation"/>
</dbReference>
<dbReference type="PRO" id="PR:Q5PPK1"/>
<dbReference type="Proteomes" id="UP000002494">
    <property type="component" value="Chromosome 12"/>
</dbReference>
<dbReference type="Bgee" id="ENSRNOG00000001009">
    <property type="expression patterns" value="Expressed in kidney and 20 other cell types or tissues"/>
</dbReference>
<dbReference type="GO" id="GO:0005765">
    <property type="term" value="C:lysosomal membrane"/>
    <property type="evidence" value="ECO:0007669"/>
    <property type="project" value="UniProtKB-SubCell"/>
</dbReference>
<dbReference type="GO" id="GO:0048471">
    <property type="term" value="C:perinuclear region of cytoplasm"/>
    <property type="evidence" value="ECO:0007669"/>
    <property type="project" value="UniProtKB-SubCell"/>
</dbReference>
<dbReference type="GO" id="GO:0042802">
    <property type="term" value="F:identical protein binding"/>
    <property type="evidence" value="ECO:0000266"/>
    <property type="project" value="RGD"/>
</dbReference>
<dbReference type="InterPro" id="IPR019317">
    <property type="entry name" value="BRI3"/>
</dbReference>
<dbReference type="PANTHER" id="PTHR13551">
    <property type="entry name" value="BRAIN PROTEIN I3"/>
    <property type="match status" value="1"/>
</dbReference>
<dbReference type="PANTHER" id="PTHR13551:SF1">
    <property type="entry name" value="MEMBRANE PROTEIN BRI3"/>
    <property type="match status" value="1"/>
</dbReference>
<dbReference type="Pfam" id="PF10164">
    <property type="entry name" value="BRI3"/>
    <property type="match status" value="1"/>
</dbReference>
<keyword id="KW-0963">Cytoplasm</keyword>
<keyword id="KW-0458">Lysosome</keyword>
<keyword id="KW-0472">Membrane</keyword>
<keyword id="KW-1185">Reference proteome</keyword>
<keyword id="KW-0812">Transmembrane</keyword>
<keyword id="KW-1133">Transmembrane helix</keyword>
<comment type="function">
    <text evidence="1">Participates in tumor necrosis factor-alpha (TNF)-induced cell death. May be a target of Wnt/beta-catenin signaling in the liver.</text>
</comment>
<comment type="subunit">
    <text evidence="1">Interacts with BRI3BP. Interacts with MGAT1 and IFITM3 (By similarity).</text>
</comment>
<comment type="subcellular location">
    <subcellularLocation>
        <location evidence="1">Lysosome membrane</location>
        <topology evidence="2">Multi-pass membrane protein</topology>
    </subcellularLocation>
    <subcellularLocation>
        <location evidence="1">Cytoplasm</location>
        <location evidence="1">Perinuclear region</location>
    </subcellularLocation>
    <text evidence="1">Co-localizes with MGAT1 and IFITM3 at the perinuclear region.</text>
</comment>
<comment type="similarity">
    <text evidence="3">Belongs to the BRI3 family.</text>
</comment>
<organism>
    <name type="scientific">Rattus norvegicus</name>
    <name type="common">Rat</name>
    <dbReference type="NCBI Taxonomy" id="10116"/>
    <lineage>
        <taxon>Eukaryota</taxon>
        <taxon>Metazoa</taxon>
        <taxon>Chordata</taxon>
        <taxon>Craniata</taxon>
        <taxon>Vertebrata</taxon>
        <taxon>Euteleostomi</taxon>
        <taxon>Mammalia</taxon>
        <taxon>Eutheria</taxon>
        <taxon>Euarchontoglires</taxon>
        <taxon>Glires</taxon>
        <taxon>Rodentia</taxon>
        <taxon>Myomorpha</taxon>
        <taxon>Muroidea</taxon>
        <taxon>Muridae</taxon>
        <taxon>Murinae</taxon>
        <taxon>Rattus</taxon>
    </lineage>
</organism>
<evidence type="ECO:0000250" key="1">
    <source>
        <dbReference type="UniProtKB" id="O95415"/>
    </source>
</evidence>
<evidence type="ECO:0000255" key="2"/>
<evidence type="ECO:0000305" key="3"/>
<accession>Q5PPK1</accession>
<feature type="chain" id="PRO_0000317694" description="Membrane protein BRI3">
    <location>
        <begin position="1"/>
        <end position="125"/>
    </location>
</feature>
<feature type="transmembrane region" description="Helical" evidence="2">
    <location>
        <begin position="71"/>
        <end position="91"/>
    </location>
</feature>
<feature type="transmembrane region" description="Helical" evidence="2">
    <location>
        <begin position="92"/>
        <end position="112"/>
    </location>
</feature>
<gene>
    <name type="primary">Bri3</name>
</gene>
<reference key="1">
    <citation type="journal article" date="2004" name="Genome Res.">
        <title>The status, quality, and expansion of the NIH full-length cDNA project: the Mammalian Gene Collection (MGC).</title>
        <authorList>
            <consortium name="The MGC Project Team"/>
        </authorList>
    </citation>
    <scope>NUCLEOTIDE SEQUENCE [LARGE SCALE MRNA]</scope>
    <source>
        <tissue>Ovary</tissue>
    </source>
</reference>
<protein>
    <recommendedName>
        <fullName evidence="3">Membrane protein BRI3</fullName>
    </recommendedName>
    <alternativeName>
        <fullName evidence="3">Brain protein I3</fullName>
    </alternativeName>
</protein>
<sequence length="125" mass="13613">MDHKPLLQERPPAYNLEAGQGDYACGPHGYGAIPTAPPPPPYPYLVTGIPTSHPRVYNIHSRAVTRYPANSIVVVGGCPVCRVGVLEYCFTCLGIFLAIVLFPFGFLCCFALRKRRCPNCGAVFT</sequence>
<proteinExistence type="evidence at transcript level"/>
<name>BRI3_RAT</name>